<organism>
    <name type="scientific">Bacillus anthracis</name>
    <dbReference type="NCBI Taxonomy" id="1392"/>
    <lineage>
        <taxon>Bacteria</taxon>
        <taxon>Bacillati</taxon>
        <taxon>Bacillota</taxon>
        <taxon>Bacilli</taxon>
        <taxon>Bacillales</taxon>
        <taxon>Bacillaceae</taxon>
        <taxon>Bacillus</taxon>
        <taxon>Bacillus cereus group</taxon>
    </lineage>
</organism>
<keyword id="KW-0378">Hydrolase</keyword>
<keyword id="KW-0460">Magnesium</keyword>
<keyword id="KW-0479">Metal-binding</keyword>
<keyword id="KW-1185">Reference proteome</keyword>
<reference key="1">
    <citation type="journal article" date="2003" name="Nature">
        <title>The genome sequence of Bacillus anthracis Ames and comparison to closely related bacteria.</title>
        <authorList>
            <person name="Read T.D."/>
            <person name="Peterson S.N."/>
            <person name="Tourasse N.J."/>
            <person name="Baillie L.W."/>
            <person name="Paulsen I.T."/>
            <person name="Nelson K.E."/>
            <person name="Tettelin H."/>
            <person name="Fouts D.E."/>
            <person name="Eisen J.A."/>
            <person name="Gill S.R."/>
            <person name="Holtzapple E.K."/>
            <person name="Okstad O.A."/>
            <person name="Helgason E."/>
            <person name="Rilstone J."/>
            <person name="Wu M."/>
            <person name="Kolonay J.F."/>
            <person name="Beanan M.J."/>
            <person name="Dodson R.J."/>
            <person name="Brinkac L.M."/>
            <person name="Gwinn M.L."/>
            <person name="DeBoy R.T."/>
            <person name="Madpu R."/>
            <person name="Daugherty S.C."/>
            <person name="Durkin A.S."/>
            <person name="Haft D.H."/>
            <person name="Nelson W.C."/>
            <person name="Peterson J.D."/>
            <person name="Pop M."/>
            <person name="Khouri H.M."/>
            <person name="Radune D."/>
            <person name="Benton J.L."/>
            <person name="Mahamoud Y."/>
            <person name="Jiang L."/>
            <person name="Hance I.R."/>
            <person name="Weidman J.F."/>
            <person name="Berry K.J."/>
            <person name="Plaut R.D."/>
            <person name="Wolf A.M."/>
            <person name="Watkins K.L."/>
            <person name="Nierman W.C."/>
            <person name="Hazen A."/>
            <person name="Cline R.T."/>
            <person name="Redmond C."/>
            <person name="Thwaite J.E."/>
            <person name="White O."/>
            <person name="Salzberg S.L."/>
            <person name="Thomason B."/>
            <person name="Friedlander A.M."/>
            <person name="Koehler T.M."/>
            <person name="Hanna P.C."/>
            <person name="Kolstoe A.-B."/>
            <person name="Fraser C.M."/>
        </authorList>
    </citation>
    <scope>NUCLEOTIDE SEQUENCE [LARGE SCALE GENOMIC DNA]</scope>
    <source>
        <strain>Ames / isolate Porton</strain>
    </source>
</reference>
<reference key="2">
    <citation type="submission" date="2004-01" db="EMBL/GenBank/DDBJ databases">
        <title>Complete genome sequence of Bacillus anthracis Sterne.</title>
        <authorList>
            <person name="Brettin T.S."/>
            <person name="Bruce D."/>
            <person name="Challacombe J.F."/>
            <person name="Gilna P."/>
            <person name="Han C."/>
            <person name="Hill K."/>
            <person name="Hitchcock P."/>
            <person name="Jackson P."/>
            <person name="Keim P."/>
            <person name="Longmire J."/>
            <person name="Lucas S."/>
            <person name="Okinaka R."/>
            <person name="Richardson P."/>
            <person name="Rubin E."/>
            <person name="Tice H."/>
        </authorList>
    </citation>
    <scope>NUCLEOTIDE SEQUENCE [LARGE SCALE GENOMIC DNA]</scope>
    <source>
        <strain>Sterne</strain>
    </source>
</reference>
<reference key="3">
    <citation type="journal article" date="2009" name="J. Bacteriol.">
        <title>The complete genome sequence of Bacillus anthracis Ames 'Ancestor'.</title>
        <authorList>
            <person name="Ravel J."/>
            <person name="Jiang L."/>
            <person name="Stanley S.T."/>
            <person name="Wilson M.R."/>
            <person name="Decker R.S."/>
            <person name="Read T.D."/>
            <person name="Worsham P."/>
            <person name="Keim P.S."/>
            <person name="Salzberg S.L."/>
            <person name="Fraser-Liggett C.M."/>
            <person name="Rasko D.A."/>
        </authorList>
    </citation>
    <scope>NUCLEOTIDE SEQUENCE [LARGE SCALE GENOMIC DNA]</scope>
    <source>
        <strain>Ames ancestor</strain>
    </source>
</reference>
<accession>Q81YV4</accession>
<accession>Q6I3Q5</accession>
<accession>Q6KXG7</accession>
<sequence>MGFPKEGEKVQIHSYKHNGSIHRMWKETTILKGTQSLVIGANDRTVVTESDGRTWITREPAICYFHENYWFNVIGMLREEGVYYYCNLSSPFAYDSEALKYIDYDLDIKVYPDMTYTLLDEDEYEKHSQIMQYPPVIDTILKRNVAQLTQWIHQRKGPFAPDFVDMWYERYLMYRN</sequence>
<name>NTDP_BACAN</name>
<comment type="function">
    <text evidence="1">Has nucleoside phosphatase activity towards nucleoside triphosphates and nucleoside diphosphates.</text>
</comment>
<comment type="catalytic activity">
    <reaction evidence="1">
        <text>a ribonucleoside 5'-triphosphate + H2O = a ribonucleoside 5'-diphosphate + phosphate + H(+)</text>
        <dbReference type="Rhea" id="RHEA:23680"/>
        <dbReference type="ChEBI" id="CHEBI:15377"/>
        <dbReference type="ChEBI" id="CHEBI:15378"/>
        <dbReference type="ChEBI" id="CHEBI:43474"/>
        <dbReference type="ChEBI" id="CHEBI:57930"/>
        <dbReference type="ChEBI" id="CHEBI:61557"/>
        <dbReference type="EC" id="3.6.1.15"/>
    </reaction>
</comment>
<comment type="catalytic activity">
    <reaction evidence="1">
        <text>a ribonucleoside 5'-diphosphate + H2O = a ribonucleoside 5'-phosphate + phosphate + H(+)</text>
        <dbReference type="Rhea" id="RHEA:36799"/>
        <dbReference type="ChEBI" id="CHEBI:15377"/>
        <dbReference type="ChEBI" id="CHEBI:15378"/>
        <dbReference type="ChEBI" id="CHEBI:43474"/>
        <dbReference type="ChEBI" id="CHEBI:57930"/>
        <dbReference type="ChEBI" id="CHEBI:58043"/>
        <dbReference type="EC" id="3.6.1.6"/>
    </reaction>
</comment>
<comment type="cofactor">
    <cofactor evidence="1">
        <name>Mg(2+)</name>
        <dbReference type="ChEBI" id="CHEBI:18420"/>
    </cofactor>
</comment>
<comment type="similarity">
    <text evidence="1">Belongs to the Ntdp family.</text>
</comment>
<feature type="chain" id="PRO_0000248084" description="Nucleoside triphosphate/diphosphate phosphatase">
    <location>
        <begin position="1"/>
        <end position="176"/>
    </location>
</feature>
<feature type="active site" description="Proton donor" evidence="1">
    <location>
        <position position="23"/>
    </location>
</feature>
<feature type="binding site" evidence="1">
    <location>
        <position position="87"/>
    </location>
    <ligand>
        <name>Mg(2+)</name>
        <dbReference type="ChEBI" id="CHEBI:18420"/>
        <label>1</label>
    </ligand>
</feature>
<feature type="binding site" evidence="1">
    <location>
        <position position="103"/>
    </location>
    <ligand>
        <name>Mg(2+)</name>
        <dbReference type="ChEBI" id="CHEBI:18420"/>
        <label>1</label>
    </ligand>
</feature>
<feature type="binding site" evidence="1">
    <location>
        <position position="105"/>
    </location>
    <ligand>
        <name>Mg(2+)</name>
        <dbReference type="ChEBI" id="CHEBI:18420"/>
        <label>2</label>
    </ligand>
</feature>
<feature type="binding site" evidence="1">
    <location>
        <position position="107"/>
    </location>
    <ligand>
        <name>Mg(2+)</name>
        <dbReference type="ChEBI" id="CHEBI:18420"/>
        <label>1</label>
    </ligand>
</feature>
<feature type="binding site" evidence="1">
    <location>
        <position position="107"/>
    </location>
    <ligand>
        <name>Mg(2+)</name>
        <dbReference type="ChEBI" id="CHEBI:18420"/>
        <label>2</label>
    </ligand>
</feature>
<feature type="binding site" evidence="1">
    <location>
        <position position="120"/>
    </location>
    <ligand>
        <name>Mg(2+)</name>
        <dbReference type="ChEBI" id="CHEBI:18420"/>
        <label>2</label>
    </ligand>
</feature>
<feature type="binding site" evidence="1">
    <location>
        <position position="123"/>
    </location>
    <ligand>
        <name>Mg(2+)</name>
        <dbReference type="ChEBI" id="CHEBI:18420"/>
        <label>2</label>
    </ligand>
</feature>
<gene>
    <name type="ordered locus">BA_0527</name>
    <name type="ordered locus">GBAA_0527</name>
    <name type="ordered locus">BAS0495</name>
</gene>
<dbReference type="EC" id="3.6.1.15" evidence="1"/>
<dbReference type="EC" id="3.6.1.6" evidence="1"/>
<dbReference type="EMBL" id="AE016879">
    <property type="protein sequence ID" value="AAP24548.1"/>
    <property type="molecule type" value="Genomic_DNA"/>
</dbReference>
<dbReference type="EMBL" id="AE017225">
    <property type="protein sequence ID" value="AAT52826.1"/>
    <property type="molecule type" value="Genomic_DNA"/>
</dbReference>
<dbReference type="EMBL" id="AE017334">
    <property type="protein sequence ID" value="AAT29620.1"/>
    <property type="molecule type" value="Genomic_DNA"/>
</dbReference>
<dbReference type="RefSeq" id="NP_843062.1">
    <property type="nucleotide sequence ID" value="NC_003997.3"/>
</dbReference>
<dbReference type="RefSeq" id="WP_000506633.1">
    <property type="nucleotide sequence ID" value="NZ_WXXJ01000029.1"/>
</dbReference>
<dbReference type="RefSeq" id="YP_026775.1">
    <property type="nucleotide sequence ID" value="NC_005945.1"/>
</dbReference>
<dbReference type="SMR" id="Q81YV4"/>
<dbReference type="STRING" id="261594.GBAA_0527"/>
<dbReference type="DNASU" id="1087786"/>
<dbReference type="GeneID" id="45020575"/>
<dbReference type="KEGG" id="ban:BA_0527"/>
<dbReference type="KEGG" id="bar:GBAA_0527"/>
<dbReference type="KEGG" id="bat:BAS0495"/>
<dbReference type="PATRIC" id="fig|198094.11.peg.526"/>
<dbReference type="eggNOG" id="COG3557">
    <property type="taxonomic scope" value="Bacteria"/>
</dbReference>
<dbReference type="HOGENOM" id="CLU_109787_1_0_9"/>
<dbReference type="OMA" id="QSYKHNG"/>
<dbReference type="OrthoDB" id="1645325at2"/>
<dbReference type="Proteomes" id="UP000000427">
    <property type="component" value="Chromosome"/>
</dbReference>
<dbReference type="Proteomes" id="UP000000594">
    <property type="component" value="Chromosome"/>
</dbReference>
<dbReference type="GO" id="GO:0000287">
    <property type="term" value="F:magnesium ion binding"/>
    <property type="evidence" value="ECO:0007669"/>
    <property type="project" value="UniProtKB-UniRule"/>
</dbReference>
<dbReference type="GO" id="GO:0017110">
    <property type="term" value="F:nucleoside diphosphate phosphatase activity"/>
    <property type="evidence" value="ECO:0007669"/>
    <property type="project" value="UniProtKB-UniRule"/>
</dbReference>
<dbReference type="GO" id="GO:0017111">
    <property type="term" value="F:ribonucleoside triphosphate phosphatase activity"/>
    <property type="evidence" value="ECO:0007669"/>
    <property type="project" value="UniProtKB-UniRule"/>
</dbReference>
<dbReference type="Gene3D" id="2.40.380.10">
    <property type="entry name" value="FomD-like"/>
    <property type="match status" value="1"/>
</dbReference>
<dbReference type="HAMAP" id="MF_01568">
    <property type="entry name" value="Ntdp"/>
    <property type="match status" value="1"/>
</dbReference>
<dbReference type="InterPro" id="IPR007295">
    <property type="entry name" value="DUF402"/>
</dbReference>
<dbReference type="InterPro" id="IPR035930">
    <property type="entry name" value="FomD-like_sf"/>
</dbReference>
<dbReference type="InterPro" id="IPR050212">
    <property type="entry name" value="Ntdp-like"/>
</dbReference>
<dbReference type="InterPro" id="IPR016882">
    <property type="entry name" value="SA1684"/>
</dbReference>
<dbReference type="NCBIfam" id="NF010183">
    <property type="entry name" value="PRK13662.1"/>
    <property type="match status" value="1"/>
</dbReference>
<dbReference type="PANTHER" id="PTHR39159">
    <property type="match status" value="1"/>
</dbReference>
<dbReference type="PANTHER" id="PTHR39159:SF1">
    <property type="entry name" value="UPF0374 PROTEIN YGAC"/>
    <property type="match status" value="1"/>
</dbReference>
<dbReference type="Pfam" id="PF04167">
    <property type="entry name" value="DUF402"/>
    <property type="match status" value="1"/>
</dbReference>
<dbReference type="PIRSF" id="PIRSF028345">
    <property type="entry name" value="UCP028345"/>
    <property type="match status" value="1"/>
</dbReference>
<dbReference type="SUPFAM" id="SSF159234">
    <property type="entry name" value="FomD-like"/>
    <property type="match status" value="1"/>
</dbReference>
<evidence type="ECO:0000255" key="1">
    <source>
        <dbReference type="HAMAP-Rule" id="MF_01568"/>
    </source>
</evidence>
<proteinExistence type="inferred from homology"/>
<protein>
    <recommendedName>
        <fullName evidence="1">Nucleoside triphosphate/diphosphate phosphatase</fullName>
        <ecNumber evidence="1">3.6.1.15</ecNumber>
        <ecNumber evidence="1">3.6.1.6</ecNumber>
    </recommendedName>
</protein>